<organism>
    <name type="scientific">Bombyx mori</name>
    <name type="common">Silk moth</name>
    <dbReference type="NCBI Taxonomy" id="7091"/>
    <lineage>
        <taxon>Eukaryota</taxon>
        <taxon>Metazoa</taxon>
        <taxon>Ecdysozoa</taxon>
        <taxon>Arthropoda</taxon>
        <taxon>Hexapoda</taxon>
        <taxon>Insecta</taxon>
        <taxon>Pterygota</taxon>
        <taxon>Neoptera</taxon>
        <taxon>Endopterygota</taxon>
        <taxon>Lepidoptera</taxon>
        <taxon>Glossata</taxon>
        <taxon>Ditrysia</taxon>
        <taxon>Bombycoidea</taxon>
        <taxon>Bombycidae</taxon>
        <taxon>Bombycinae</taxon>
        <taxon>Bombyx</taxon>
    </lineage>
</organism>
<proteinExistence type="evidence at transcript level"/>
<keyword id="KW-0175">Coiled coil</keyword>
<keyword id="KW-0963">Cytoplasm</keyword>
<keyword id="KW-0539">Nucleus</keyword>
<keyword id="KW-1185">Reference proteome</keyword>
<feature type="chain" id="PRO_0000378161" description="Partner of Y14 and mago">
    <location>
        <begin position="1"/>
        <end position="193"/>
    </location>
</feature>
<feature type="region of interest" description="Disordered" evidence="4">
    <location>
        <begin position="1"/>
        <end position="27"/>
    </location>
</feature>
<feature type="region of interest" description="Disordered" evidence="4">
    <location>
        <begin position="118"/>
        <end position="142"/>
    </location>
</feature>
<feature type="coiled-coil region" evidence="3">
    <location>
        <begin position="139"/>
        <end position="192"/>
    </location>
</feature>
<feature type="compositionally biased region" description="Polar residues" evidence="4">
    <location>
        <begin position="122"/>
        <end position="137"/>
    </location>
</feature>
<sequence length="193" mass="21858">MSTPTAYEHDADGSKFIPATQRPDGTWRKPRRIKEGYVPQEEVPLYESKGKQFRARQNDGLPVGLTPEIVAQAQKKKGQRSTIQPIPGMIITVEKKKKKKKTVTGVEEAAEKLAKCEIQEPTLPSQSVPTESISQSDPTKRLKNLRKKLREIEFLEEKIKAGLLKSPDKDQKEKMSKKNEILNEIDILKNSIL</sequence>
<gene>
    <name evidence="2" type="primary">Pym</name>
    <name type="synonym">wibg</name>
</gene>
<protein>
    <recommendedName>
        <fullName evidence="2">Partner of Y14 and mago</fullName>
    </recommendedName>
    <alternativeName>
        <fullName>Protein wibg homolog</fullName>
    </alternativeName>
</protein>
<dbReference type="EMBL" id="DQ311430">
    <property type="protein sequence ID" value="ABD36374.1"/>
    <property type="molecule type" value="mRNA"/>
</dbReference>
<dbReference type="RefSeq" id="NP_001040288.1">
    <property type="nucleotide sequence ID" value="NM_001046823.1"/>
</dbReference>
<dbReference type="SMR" id="Q2F5J3"/>
<dbReference type="FunCoup" id="Q2F5J3">
    <property type="interactions" value="1126"/>
</dbReference>
<dbReference type="STRING" id="7091.Q2F5J3"/>
<dbReference type="PaxDb" id="7091-BGIBMGA009902-TA"/>
<dbReference type="EnsemblMetazoa" id="NM_001046823.1">
    <property type="protein sequence ID" value="NP_001040288.1"/>
    <property type="gene ID" value="GeneID_692986"/>
</dbReference>
<dbReference type="GeneID" id="692986"/>
<dbReference type="KEGG" id="bmor:692986"/>
<dbReference type="CTD" id="37780"/>
<dbReference type="eggNOG" id="KOG4325">
    <property type="taxonomic scope" value="Eukaryota"/>
</dbReference>
<dbReference type="HOGENOM" id="CLU_074603_3_0_1"/>
<dbReference type="InParanoid" id="Q2F5J3"/>
<dbReference type="OrthoDB" id="516690at7088"/>
<dbReference type="Proteomes" id="UP000005204">
    <property type="component" value="Unassembled WGS sequence"/>
</dbReference>
<dbReference type="GO" id="GO:0005737">
    <property type="term" value="C:cytoplasm"/>
    <property type="evidence" value="ECO:0007669"/>
    <property type="project" value="UniProtKB-SubCell"/>
</dbReference>
<dbReference type="GO" id="GO:0035145">
    <property type="term" value="C:exon-exon junction complex"/>
    <property type="evidence" value="ECO:0000250"/>
    <property type="project" value="UniProtKB"/>
</dbReference>
<dbReference type="GO" id="GO:0003723">
    <property type="term" value="F:RNA binding"/>
    <property type="evidence" value="ECO:0007669"/>
    <property type="project" value="TreeGrafter"/>
</dbReference>
<dbReference type="GO" id="GO:1903259">
    <property type="term" value="P:exon-exon junction complex disassembly"/>
    <property type="evidence" value="ECO:0007669"/>
    <property type="project" value="InterPro"/>
</dbReference>
<dbReference type="GO" id="GO:0000184">
    <property type="term" value="P:nuclear-transcribed mRNA catabolic process, nonsense-mediated decay"/>
    <property type="evidence" value="ECO:0000250"/>
    <property type="project" value="UniProtKB"/>
</dbReference>
<dbReference type="InterPro" id="IPR039333">
    <property type="entry name" value="PYM1"/>
</dbReference>
<dbReference type="InterPro" id="IPR015362">
    <property type="entry name" value="WIBG_mago-bd"/>
</dbReference>
<dbReference type="InterPro" id="IPR036348">
    <property type="entry name" value="WIBG_N_sf"/>
</dbReference>
<dbReference type="PANTHER" id="PTHR22959:SF0">
    <property type="entry name" value="PARTNER OF Y14 AND MAGO"/>
    <property type="match status" value="1"/>
</dbReference>
<dbReference type="PANTHER" id="PTHR22959">
    <property type="entry name" value="PYM PROTEIN"/>
    <property type="match status" value="1"/>
</dbReference>
<dbReference type="Pfam" id="PF09282">
    <property type="entry name" value="Mago-bind"/>
    <property type="match status" value="1"/>
</dbReference>
<dbReference type="SMART" id="SM01273">
    <property type="entry name" value="Mago-bind"/>
    <property type="match status" value="1"/>
</dbReference>
<dbReference type="SUPFAM" id="SSF101931">
    <property type="entry name" value="Pym (Within the bgcn gene intron protein, WIBG), N-terminal domain"/>
    <property type="match status" value="1"/>
</dbReference>
<name>PYM_BOMMO</name>
<accession>Q2F5J3</accession>
<reference key="1">
    <citation type="submission" date="2005-11" db="EMBL/GenBank/DDBJ databases">
        <title>Blast silkworm EST database for functional genes.</title>
        <authorList>
            <person name="Niu B.L."/>
            <person name="Meng Z.Q."/>
            <person name="Weng H.B."/>
            <person name="Shen W.F."/>
            <person name="He L.H."/>
            <person name="Zheng K.F."/>
            <person name="Ye S.T."/>
            <person name="Lin T.B."/>
            <person name="Chen J.E."/>
        </authorList>
    </citation>
    <scope>NUCLEOTIDE SEQUENCE [LARGE SCALE MRNA]</scope>
</reference>
<evidence type="ECO:0000250" key="1"/>
<evidence type="ECO:0000250" key="2">
    <source>
        <dbReference type="UniProtKB" id="P82804"/>
    </source>
</evidence>
<evidence type="ECO:0000255" key="3"/>
<evidence type="ECO:0000256" key="4">
    <source>
        <dbReference type="SAM" id="MobiDB-lite"/>
    </source>
</evidence>
<evidence type="ECO:0000305" key="5"/>
<comment type="function">
    <text evidence="1">Regulator of the exon junction complex (EJC), a multiprotein complex that associates immediately upstream of the exon-exon junction on mRNAs and serves as a positional landmarks for the intron exon structure of genes and directs post-transcriptional processes in the cytoplasm such as mRNA export, nonsense-mediated mRNA decay (NMD) or translation.</text>
</comment>
<comment type="subunit">
    <text evidence="1">Interacts (via N-terminus) with mago and tsu/Y14; the interaction is direct.</text>
</comment>
<comment type="subcellular location">
    <subcellularLocation>
        <location evidence="1">Cytoplasm</location>
    </subcellularLocation>
    <subcellularLocation>
        <location evidence="1">Nucleus</location>
    </subcellularLocation>
    <text evidence="1">Shuttles between the nucleus and the cytoplasm. Nuclear export is mediated by emb/Crm1 (By similarity).</text>
</comment>
<comment type="similarity">
    <text evidence="5">Belongs to the pym family.</text>
</comment>